<sequence>MSWQTYVDDHLCCEIDGQHLTSAAILGHDGSVWTESPNFPKFKPEEIAGIVKDFEEPGHLAPTGLFLGGTKYMVIQGEPGVVIRGKKGTGGITIKKTGMALILGIYDEPMTPGQCNLVVERLGDYLIDQGY</sequence>
<evidence type="ECO:0000250" key="1"/>
<evidence type="ECO:0000305" key="2"/>
<feature type="initiator methionine" description="Removed" evidence="1">
    <location>
        <position position="1"/>
    </location>
</feature>
<feature type="chain" id="PRO_0000199677" description="Profilin-1">
    <location>
        <begin position="2"/>
        <end position="131"/>
    </location>
</feature>
<gene>
    <name type="primary">PRO1</name>
</gene>
<comment type="function">
    <text>Binds to actin and affects the structure of the cytoskeleton. At high concentrations, profilin prevents the polymerization of actin, whereas it enhances it at low concentrations. By binding to PIP2, it inhibits the formation of IP3 and DG.</text>
</comment>
<comment type="subunit">
    <text>Occurs in many kinds of cells as a complex with monomeric actin in a 1:1 ratio.</text>
</comment>
<comment type="subcellular location">
    <subcellularLocation>
        <location>Cytoplasm</location>
        <location>Cytoskeleton</location>
    </subcellularLocation>
</comment>
<comment type="similarity">
    <text evidence="2">Belongs to the profilin family.</text>
</comment>
<keyword id="KW-0009">Actin-binding</keyword>
<keyword id="KW-0963">Cytoplasm</keyword>
<keyword id="KW-0206">Cytoskeleton</keyword>
<keyword id="KW-1185">Reference proteome</keyword>
<organism>
    <name type="scientific">Triticum aestivum</name>
    <name type="common">Wheat</name>
    <dbReference type="NCBI Taxonomy" id="4565"/>
    <lineage>
        <taxon>Eukaryota</taxon>
        <taxon>Viridiplantae</taxon>
        <taxon>Streptophyta</taxon>
        <taxon>Embryophyta</taxon>
        <taxon>Tracheophyta</taxon>
        <taxon>Spermatophyta</taxon>
        <taxon>Magnoliopsida</taxon>
        <taxon>Liliopsida</taxon>
        <taxon>Poales</taxon>
        <taxon>Poaceae</taxon>
        <taxon>BOP clade</taxon>
        <taxon>Pooideae</taxon>
        <taxon>Triticodae</taxon>
        <taxon>Triticeae</taxon>
        <taxon>Triticinae</taxon>
        <taxon>Triticum</taxon>
    </lineage>
</organism>
<reference key="1">
    <citation type="journal article" date="1994" name="Int. Arch. Allergy Immunol.">
        <title>Polymerase chain reaction based cDNA cloning of wheat profilin: a potential plant allergen.</title>
        <authorList>
            <person name="Rihs H.-P."/>
            <person name="Rozynek P."/>
            <person name="May-Taube K."/>
            <person name="Welticke B."/>
            <person name="Baur X."/>
        </authorList>
    </citation>
    <scope>NUCLEOTIDE SEQUENCE [MRNA]</scope>
    <source>
        <strain>cv. TAM 107</strain>
    </source>
</reference>
<dbReference type="EMBL" id="X89825">
    <property type="protein sequence ID" value="CAA61943.2"/>
    <property type="molecule type" value="mRNA"/>
</dbReference>
<dbReference type="PIR" id="T06551">
    <property type="entry name" value="T06551"/>
</dbReference>
<dbReference type="SMR" id="P49232"/>
<dbReference type="STRING" id="4565.P49232"/>
<dbReference type="Allergome" id="3498">
    <property type="allergen name" value="Tri a 12.0101"/>
</dbReference>
<dbReference type="Allergome" id="767">
    <property type="allergen name" value="Tri a 12"/>
</dbReference>
<dbReference type="PaxDb" id="4565-Traes_7AS_DA1089F6B.2"/>
<dbReference type="Proteomes" id="UP000019116">
    <property type="component" value="Unplaced"/>
</dbReference>
<dbReference type="ExpressionAtlas" id="P49232">
    <property type="expression patterns" value="baseline"/>
</dbReference>
<dbReference type="GO" id="GO:0005938">
    <property type="term" value="C:cell cortex"/>
    <property type="evidence" value="ECO:0000318"/>
    <property type="project" value="GO_Central"/>
</dbReference>
<dbReference type="GO" id="GO:0005856">
    <property type="term" value="C:cytoskeleton"/>
    <property type="evidence" value="ECO:0007669"/>
    <property type="project" value="UniProtKB-SubCell"/>
</dbReference>
<dbReference type="GO" id="GO:0003785">
    <property type="term" value="F:actin monomer binding"/>
    <property type="evidence" value="ECO:0000318"/>
    <property type="project" value="GO_Central"/>
</dbReference>
<dbReference type="CDD" id="cd00148">
    <property type="entry name" value="PROF"/>
    <property type="match status" value="1"/>
</dbReference>
<dbReference type="FunFam" id="3.30.450.30:FF:000001">
    <property type="entry name" value="Profilin"/>
    <property type="match status" value="1"/>
</dbReference>
<dbReference type="Gene3D" id="3.30.450.30">
    <property type="entry name" value="Dynein light chain 2a, cytoplasmic"/>
    <property type="match status" value="1"/>
</dbReference>
<dbReference type="InterPro" id="IPR048278">
    <property type="entry name" value="PFN"/>
</dbReference>
<dbReference type="InterPro" id="IPR005455">
    <property type="entry name" value="PFN_euk"/>
</dbReference>
<dbReference type="InterPro" id="IPR036140">
    <property type="entry name" value="PFN_sf"/>
</dbReference>
<dbReference type="InterPro" id="IPR027310">
    <property type="entry name" value="Profilin_CS"/>
</dbReference>
<dbReference type="PANTHER" id="PTHR11604">
    <property type="entry name" value="PROFILIN"/>
    <property type="match status" value="1"/>
</dbReference>
<dbReference type="PANTHER" id="PTHR11604:SF67">
    <property type="entry name" value="PROFILIN LP04"/>
    <property type="match status" value="1"/>
</dbReference>
<dbReference type="Pfam" id="PF00235">
    <property type="entry name" value="Profilin"/>
    <property type="match status" value="1"/>
</dbReference>
<dbReference type="PRINTS" id="PR00392">
    <property type="entry name" value="PROFILIN"/>
</dbReference>
<dbReference type="PRINTS" id="PR01640">
    <property type="entry name" value="PROFILINPLNT"/>
</dbReference>
<dbReference type="SMART" id="SM00392">
    <property type="entry name" value="PROF"/>
    <property type="match status" value="1"/>
</dbReference>
<dbReference type="SUPFAM" id="SSF55770">
    <property type="entry name" value="Profilin (actin-binding protein)"/>
    <property type="match status" value="1"/>
</dbReference>
<dbReference type="PROSITE" id="PS00414">
    <property type="entry name" value="PROFILIN"/>
    <property type="match status" value="1"/>
</dbReference>
<name>PROF1_WHEAT</name>
<accession>P49232</accession>
<proteinExistence type="evidence at transcript level"/>
<protein>
    <recommendedName>
        <fullName>Profilin-1</fullName>
    </recommendedName>
</protein>